<dbReference type="EMBL" id="CP000860">
    <property type="protein sequence ID" value="ACA58775.1"/>
    <property type="molecule type" value="Genomic_DNA"/>
</dbReference>
<dbReference type="RefSeq" id="WP_012301368.1">
    <property type="nucleotide sequence ID" value="NC_010424.1"/>
</dbReference>
<dbReference type="SMR" id="B1I1M6"/>
<dbReference type="STRING" id="477974.Daud_0214"/>
<dbReference type="KEGG" id="dau:Daud_0214"/>
<dbReference type="eggNOG" id="COG0222">
    <property type="taxonomic scope" value="Bacteria"/>
</dbReference>
<dbReference type="HOGENOM" id="CLU_086499_3_2_9"/>
<dbReference type="OrthoDB" id="9811748at2"/>
<dbReference type="Proteomes" id="UP000008544">
    <property type="component" value="Chromosome"/>
</dbReference>
<dbReference type="GO" id="GO:0022625">
    <property type="term" value="C:cytosolic large ribosomal subunit"/>
    <property type="evidence" value="ECO:0007669"/>
    <property type="project" value="TreeGrafter"/>
</dbReference>
<dbReference type="GO" id="GO:0003729">
    <property type="term" value="F:mRNA binding"/>
    <property type="evidence" value="ECO:0007669"/>
    <property type="project" value="TreeGrafter"/>
</dbReference>
<dbReference type="GO" id="GO:0003735">
    <property type="term" value="F:structural constituent of ribosome"/>
    <property type="evidence" value="ECO:0007669"/>
    <property type="project" value="InterPro"/>
</dbReference>
<dbReference type="GO" id="GO:0006412">
    <property type="term" value="P:translation"/>
    <property type="evidence" value="ECO:0007669"/>
    <property type="project" value="UniProtKB-UniRule"/>
</dbReference>
<dbReference type="CDD" id="cd00387">
    <property type="entry name" value="Ribosomal_L7_L12"/>
    <property type="match status" value="1"/>
</dbReference>
<dbReference type="FunFam" id="3.30.1390.10:FF:000001">
    <property type="entry name" value="50S ribosomal protein L7/L12"/>
    <property type="match status" value="1"/>
</dbReference>
<dbReference type="Gene3D" id="3.30.1390.10">
    <property type="match status" value="1"/>
</dbReference>
<dbReference type="Gene3D" id="1.20.5.710">
    <property type="entry name" value="Single helix bin"/>
    <property type="match status" value="1"/>
</dbReference>
<dbReference type="HAMAP" id="MF_00368">
    <property type="entry name" value="Ribosomal_bL12"/>
    <property type="match status" value="1"/>
</dbReference>
<dbReference type="InterPro" id="IPR000206">
    <property type="entry name" value="Ribosomal_bL12"/>
</dbReference>
<dbReference type="InterPro" id="IPR013823">
    <property type="entry name" value="Ribosomal_bL12_C"/>
</dbReference>
<dbReference type="InterPro" id="IPR014719">
    <property type="entry name" value="Ribosomal_bL12_C/ClpS-like"/>
</dbReference>
<dbReference type="InterPro" id="IPR008932">
    <property type="entry name" value="Ribosomal_bL12_oligo"/>
</dbReference>
<dbReference type="InterPro" id="IPR036235">
    <property type="entry name" value="Ribosomal_bL12_oligo_N_sf"/>
</dbReference>
<dbReference type="NCBIfam" id="TIGR00855">
    <property type="entry name" value="L12"/>
    <property type="match status" value="1"/>
</dbReference>
<dbReference type="PANTHER" id="PTHR45987">
    <property type="entry name" value="39S RIBOSOMAL PROTEIN L12"/>
    <property type="match status" value="1"/>
</dbReference>
<dbReference type="PANTHER" id="PTHR45987:SF4">
    <property type="entry name" value="LARGE RIBOSOMAL SUBUNIT PROTEIN BL12M"/>
    <property type="match status" value="1"/>
</dbReference>
<dbReference type="Pfam" id="PF00542">
    <property type="entry name" value="Ribosomal_L12"/>
    <property type="match status" value="1"/>
</dbReference>
<dbReference type="Pfam" id="PF16320">
    <property type="entry name" value="Ribosomal_L12_N"/>
    <property type="match status" value="1"/>
</dbReference>
<dbReference type="SUPFAM" id="SSF54736">
    <property type="entry name" value="ClpS-like"/>
    <property type="match status" value="1"/>
</dbReference>
<dbReference type="SUPFAM" id="SSF48300">
    <property type="entry name" value="Ribosomal protein L7/12, oligomerisation (N-terminal) domain"/>
    <property type="match status" value="1"/>
</dbReference>
<feature type="chain" id="PRO_1000121425" description="Large ribosomal subunit protein bL12">
    <location>
        <begin position="1"/>
        <end position="126"/>
    </location>
</feature>
<accession>B1I1M6</accession>
<name>RL7_DESAP</name>
<evidence type="ECO:0000255" key="1">
    <source>
        <dbReference type="HAMAP-Rule" id="MF_00368"/>
    </source>
</evidence>
<evidence type="ECO:0000305" key="2"/>
<sequence>MSKVNEIIEIVKGLTVLELAELVKAMEEEFGVSAAAPVAAVAAVPAAAAPVVEEEEQTEFDVILKNVGNEKIKVIKVVREITGLGLKEAKELVDGAPNPVKEKVNKEEAETIKKKLEEVGAGIEIK</sequence>
<comment type="function">
    <text evidence="1">Forms part of the ribosomal stalk which helps the ribosome interact with GTP-bound translation factors. Is thus essential for accurate translation.</text>
</comment>
<comment type="subunit">
    <text evidence="1">Homodimer. Part of the ribosomal stalk of the 50S ribosomal subunit. Forms a multimeric L10(L12)X complex, where L10 forms an elongated spine to which 2 to 4 L12 dimers bind in a sequential fashion. Binds GTP-bound translation factors.</text>
</comment>
<comment type="similarity">
    <text evidence="1">Belongs to the bacterial ribosomal protein bL12 family.</text>
</comment>
<keyword id="KW-1185">Reference proteome</keyword>
<keyword id="KW-0687">Ribonucleoprotein</keyword>
<keyword id="KW-0689">Ribosomal protein</keyword>
<organism>
    <name type="scientific">Desulforudis audaxviator (strain MP104C)</name>
    <dbReference type="NCBI Taxonomy" id="477974"/>
    <lineage>
        <taxon>Bacteria</taxon>
        <taxon>Bacillati</taxon>
        <taxon>Bacillota</taxon>
        <taxon>Clostridia</taxon>
        <taxon>Thermoanaerobacterales</taxon>
        <taxon>Candidatus Desulforudaceae</taxon>
        <taxon>Candidatus Desulforudis</taxon>
    </lineage>
</organism>
<proteinExistence type="inferred from homology"/>
<protein>
    <recommendedName>
        <fullName evidence="1">Large ribosomal subunit protein bL12</fullName>
    </recommendedName>
    <alternativeName>
        <fullName evidence="2">50S ribosomal protein L7/L12</fullName>
    </alternativeName>
</protein>
<gene>
    <name evidence="1" type="primary">rplL</name>
    <name type="ordered locus">Daud_0214</name>
</gene>
<reference key="1">
    <citation type="submission" date="2007-10" db="EMBL/GenBank/DDBJ databases">
        <title>Complete sequence of chromosome of Desulforudis audaxviator MP104C.</title>
        <authorList>
            <person name="Copeland A."/>
            <person name="Lucas S."/>
            <person name="Lapidus A."/>
            <person name="Barry K."/>
            <person name="Glavina del Rio T."/>
            <person name="Dalin E."/>
            <person name="Tice H."/>
            <person name="Bruce D."/>
            <person name="Pitluck S."/>
            <person name="Lowry S.R."/>
            <person name="Larimer F."/>
            <person name="Land M.L."/>
            <person name="Hauser L."/>
            <person name="Kyrpides N."/>
            <person name="Ivanova N.N."/>
            <person name="Richardson P."/>
        </authorList>
    </citation>
    <scope>NUCLEOTIDE SEQUENCE [LARGE SCALE GENOMIC DNA]</scope>
    <source>
        <strain>MP104C</strain>
    </source>
</reference>